<comment type="function">
    <text evidence="1">Located at the top of the head of the 30S subunit, it contacts several helices of the 16S rRNA. In the 70S ribosome it contacts the 23S rRNA (bridge B1a) and protein L5 of the 50S subunit (bridge B1b), connecting the 2 subunits; these bridges are implicated in subunit movement. Contacts the tRNAs in the A and P-sites.</text>
</comment>
<comment type="subunit">
    <text evidence="1">Part of the 30S ribosomal subunit. Forms a loose heterodimer with protein S19. Forms two bridges to the 50S subunit in the 70S ribosome.</text>
</comment>
<comment type="similarity">
    <text evidence="1">Belongs to the universal ribosomal protein uS13 family.</text>
</comment>
<keyword id="KW-1185">Reference proteome</keyword>
<keyword id="KW-0687">Ribonucleoprotein</keyword>
<keyword id="KW-0689">Ribosomal protein</keyword>
<keyword id="KW-0694">RNA-binding</keyword>
<keyword id="KW-0699">rRNA-binding</keyword>
<keyword id="KW-0820">tRNA-binding</keyword>
<organism>
    <name type="scientific">Desulfatibacillum aliphaticivorans</name>
    <dbReference type="NCBI Taxonomy" id="218208"/>
    <lineage>
        <taxon>Bacteria</taxon>
        <taxon>Pseudomonadati</taxon>
        <taxon>Thermodesulfobacteriota</taxon>
        <taxon>Desulfobacteria</taxon>
        <taxon>Desulfobacterales</taxon>
        <taxon>Desulfatibacillaceae</taxon>
        <taxon>Desulfatibacillum</taxon>
    </lineage>
</organism>
<feature type="chain" id="PRO_1000141254" description="Small ribosomal subunit protein uS13">
    <location>
        <begin position="1"/>
        <end position="127"/>
    </location>
</feature>
<feature type="region of interest" description="Disordered" evidence="2">
    <location>
        <begin position="95"/>
        <end position="127"/>
    </location>
</feature>
<feature type="compositionally biased region" description="Basic residues" evidence="2">
    <location>
        <begin position="108"/>
        <end position="127"/>
    </location>
</feature>
<proteinExistence type="inferred from homology"/>
<protein>
    <recommendedName>
        <fullName evidence="1">Small ribosomal subunit protein uS13</fullName>
    </recommendedName>
    <alternativeName>
        <fullName evidence="3">30S ribosomal protein S13</fullName>
    </alternativeName>
</protein>
<name>RS13_DESAL</name>
<sequence length="127" mass="14329">MARIAGVDLPKRKRIEIGLTYIFGIGRSTSSKILEELGIDPDTKTDDLTEGQVNDIRKLIDSKYRVEGELRTQISMNIKRLMDLGCYRGLRHRRGLPVHGQRTSTNARTRKGPRRAAVKKKGGAKKK</sequence>
<evidence type="ECO:0000255" key="1">
    <source>
        <dbReference type="HAMAP-Rule" id="MF_01315"/>
    </source>
</evidence>
<evidence type="ECO:0000256" key="2">
    <source>
        <dbReference type="SAM" id="MobiDB-lite"/>
    </source>
</evidence>
<evidence type="ECO:0000305" key="3"/>
<gene>
    <name evidence="1" type="primary">rpsM</name>
    <name type="ordered locus">Dalk_1892</name>
</gene>
<reference key="1">
    <citation type="journal article" date="2012" name="Environ. Microbiol.">
        <title>The genome sequence of Desulfatibacillum alkenivorans AK-01: a blueprint for anaerobic alkane oxidation.</title>
        <authorList>
            <person name="Callaghan A.V."/>
            <person name="Morris B.E."/>
            <person name="Pereira I.A."/>
            <person name="McInerney M.J."/>
            <person name="Austin R.N."/>
            <person name="Groves J.T."/>
            <person name="Kukor J.J."/>
            <person name="Suflita J.M."/>
            <person name="Young L.Y."/>
            <person name="Zylstra G.J."/>
            <person name="Wawrik B."/>
        </authorList>
    </citation>
    <scope>NUCLEOTIDE SEQUENCE [LARGE SCALE GENOMIC DNA]</scope>
    <source>
        <strain>AK-01</strain>
    </source>
</reference>
<accession>B8FER2</accession>
<dbReference type="EMBL" id="CP001322">
    <property type="protein sequence ID" value="ACL03589.1"/>
    <property type="molecule type" value="Genomic_DNA"/>
</dbReference>
<dbReference type="RefSeq" id="WP_012611020.1">
    <property type="nucleotide sequence ID" value="NC_011768.1"/>
</dbReference>
<dbReference type="SMR" id="B8FER2"/>
<dbReference type="KEGG" id="dal:Dalk_1892"/>
<dbReference type="eggNOG" id="COG0099">
    <property type="taxonomic scope" value="Bacteria"/>
</dbReference>
<dbReference type="HOGENOM" id="CLU_103849_1_2_7"/>
<dbReference type="Proteomes" id="UP000000739">
    <property type="component" value="Chromosome"/>
</dbReference>
<dbReference type="GO" id="GO:0005829">
    <property type="term" value="C:cytosol"/>
    <property type="evidence" value="ECO:0007669"/>
    <property type="project" value="TreeGrafter"/>
</dbReference>
<dbReference type="GO" id="GO:0015935">
    <property type="term" value="C:small ribosomal subunit"/>
    <property type="evidence" value="ECO:0007669"/>
    <property type="project" value="TreeGrafter"/>
</dbReference>
<dbReference type="GO" id="GO:0019843">
    <property type="term" value="F:rRNA binding"/>
    <property type="evidence" value="ECO:0007669"/>
    <property type="project" value="UniProtKB-UniRule"/>
</dbReference>
<dbReference type="GO" id="GO:0003735">
    <property type="term" value="F:structural constituent of ribosome"/>
    <property type="evidence" value="ECO:0007669"/>
    <property type="project" value="InterPro"/>
</dbReference>
<dbReference type="GO" id="GO:0000049">
    <property type="term" value="F:tRNA binding"/>
    <property type="evidence" value="ECO:0007669"/>
    <property type="project" value="UniProtKB-UniRule"/>
</dbReference>
<dbReference type="GO" id="GO:0006412">
    <property type="term" value="P:translation"/>
    <property type="evidence" value="ECO:0007669"/>
    <property type="project" value="UniProtKB-UniRule"/>
</dbReference>
<dbReference type="FunFam" id="1.10.8.50:FF:000001">
    <property type="entry name" value="30S ribosomal protein S13"/>
    <property type="match status" value="1"/>
</dbReference>
<dbReference type="FunFam" id="4.10.910.10:FF:000001">
    <property type="entry name" value="30S ribosomal protein S13"/>
    <property type="match status" value="1"/>
</dbReference>
<dbReference type="Gene3D" id="1.10.8.50">
    <property type="match status" value="1"/>
</dbReference>
<dbReference type="Gene3D" id="4.10.910.10">
    <property type="entry name" value="30s ribosomal protein s13, domain 2"/>
    <property type="match status" value="1"/>
</dbReference>
<dbReference type="HAMAP" id="MF_01315">
    <property type="entry name" value="Ribosomal_uS13"/>
    <property type="match status" value="1"/>
</dbReference>
<dbReference type="InterPro" id="IPR027437">
    <property type="entry name" value="Rbsml_uS13_C"/>
</dbReference>
<dbReference type="InterPro" id="IPR001892">
    <property type="entry name" value="Ribosomal_uS13"/>
</dbReference>
<dbReference type="InterPro" id="IPR010979">
    <property type="entry name" value="Ribosomal_uS13-like_H2TH"/>
</dbReference>
<dbReference type="InterPro" id="IPR019980">
    <property type="entry name" value="Ribosomal_uS13_bac-type"/>
</dbReference>
<dbReference type="InterPro" id="IPR018269">
    <property type="entry name" value="Ribosomal_uS13_CS"/>
</dbReference>
<dbReference type="NCBIfam" id="TIGR03631">
    <property type="entry name" value="uS13_bact"/>
    <property type="match status" value="1"/>
</dbReference>
<dbReference type="PANTHER" id="PTHR10871">
    <property type="entry name" value="30S RIBOSOMAL PROTEIN S13/40S RIBOSOMAL PROTEIN S18"/>
    <property type="match status" value="1"/>
</dbReference>
<dbReference type="PANTHER" id="PTHR10871:SF1">
    <property type="entry name" value="SMALL RIBOSOMAL SUBUNIT PROTEIN US13M"/>
    <property type="match status" value="1"/>
</dbReference>
<dbReference type="Pfam" id="PF00416">
    <property type="entry name" value="Ribosomal_S13"/>
    <property type="match status" value="1"/>
</dbReference>
<dbReference type="PIRSF" id="PIRSF002134">
    <property type="entry name" value="Ribosomal_S13"/>
    <property type="match status" value="1"/>
</dbReference>
<dbReference type="SUPFAM" id="SSF46946">
    <property type="entry name" value="S13-like H2TH domain"/>
    <property type="match status" value="1"/>
</dbReference>
<dbReference type="PROSITE" id="PS00646">
    <property type="entry name" value="RIBOSOMAL_S13_1"/>
    <property type="match status" value="1"/>
</dbReference>
<dbReference type="PROSITE" id="PS50159">
    <property type="entry name" value="RIBOSOMAL_S13_2"/>
    <property type="match status" value="1"/>
</dbReference>